<name>NRFA_ECO27</name>
<gene>
    <name evidence="1" type="primary">nrfA</name>
    <name type="ordered locus">E2348C_4393</name>
</gene>
<protein>
    <recommendedName>
        <fullName evidence="1">Cytochrome c-552</fullName>
        <ecNumber evidence="1">1.7.2.2</ecNumber>
    </recommendedName>
    <alternativeName>
        <fullName evidence="1">Ammonia-forming cytochrome c nitrite reductase</fullName>
        <shortName evidence="1">Cytochrome c nitrite reductase</shortName>
    </alternativeName>
</protein>
<accession>B7UPN8</accession>
<proteinExistence type="inferred from homology"/>
<keyword id="KW-0106">Calcium</keyword>
<keyword id="KW-0249">Electron transport</keyword>
<keyword id="KW-0349">Heme</keyword>
<keyword id="KW-0408">Iron</keyword>
<keyword id="KW-0479">Metal-binding</keyword>
<keyword id="KW-0560">Oxidoreductase</keyword>
<keyword id="KW-0574">Periplasm</keyword>
<keyword id="KW-1185">Reference proteome</keyword>
<keyword id="KW-0732">Signal</keyword>
<keyword id="KW-0813">Transport</keyword>
<evidence type="ECO:0000255" key="1">
    <source>
        <dbReference type="HAMAP-Rule" id="MF_01182"/>
    </source>
</evidence>
<reference key="1">
    <citation type="journal article" date="2009" name="J. Bacteriol.">
        <title>Complete genome sequence and comparative genome analysis of enteropathogenic Escherichia coli O127:H6 strain E2348/69.</title>
        <authorList>
            <person name="Iguchi A."/>
            <person name="Thomson N.R."/>
            <person name="Ogura Y."/>
            <person name="Saunders D."/>
            <person name="Ooka T."/>
            <person name="Henderson I.R."/>
            <person name="Harris D."/>
            <person name="Asadulghani M."/>
            <person name="Kurokawa K."/>
            <person name="Dean P."/>
            <person name="Kenny B."/>
            <person name="Quail M.A."/>
            <person name="Thurston S."/>
            <person name="Dougan G."/>
            <person name="Hayashi T."/>
            <person name="Parkhill J."/>
            <person name="Frankel G."/>
        </authorList>
    </citation>
    <scope>NUCLEOTIDE SEQUENCE [LARGE SCALE GENOMIC DNA]</scope>
    <source>
        <strain>E2348/69 / EPEC</strain>
    </source>
</reference>
<organism>
    <name type="scientific">Escherichia coli O127:H6 (strain E2348/69 / EPEC)</name>
    <dbReference type="NCBI Taxonomy" id="574521"/>
    <lineage>
        <taxon>Bacteria</taxon>
        <taxon>Pseudomonadati</taxon>
        <taxon>Pseudomonadota</taxon>
        <taxon>Gammaproteobacteria</taxon>
        <taxon>Enterobacterales</taxon>
        <taxon>Enterobacteriaceae</taxon>
        <taxon>Escherichia</taxon>
    </lineage>
</organism>
<sequence length="478" mass="53676">MTRIKINARRIFSLLIPFFFFTSVHAEQTAAPATPVTVEAKNETFAPQHPDQYLSWKATSEQSERVDALAEDPRLVILWAGYPFSRDYNKPRGHAFAVTDVRETLRTGAPKNAEDGPLPMACWSCKSPDVARLIQKDGEDGYFHGKWARGGPEIVNNLGCADCHNTASPEFAKGKPELTLSRPYAARAMEAIGKPFEKAGRFDQQSMVCGQCHVEYYFDGKNKAVKFPWDDGMKVENMEQYYDKIAFSDWTNSLSKTPMLKAQHPEYETWTAGIHGKNNVTCIDCHMPKVQNAEGKLYTDHKIGNPFDNFAQTCANCHTQDKAALQKVVAERKQSINDLKIKVEDQLVHAHFEAKAALDAGATEAEMKPIQDDIRHAQWRWDLAIASHGIHMHAPEEGLRMLGTAMDKAADARTKLARLLATKGITHEIQIPDISTKEKAQQAIGLNMEQIKAEKQDFIKTVIPQWEEQARKNGLLSQ</sequence>
<dbReference type="EC" id="1.7.2.2" evidence="1"/>
<dbReference type="EMBL" id="FM180568">
    <property type="protein sequence ID" value="CAS11941.1"/>
    <property type="molecule type" value="Genomic_DNA"/>
</dbReference>
<dbReference type="RefSeq" id="WP_000196879.1">
    <property type="nucleotide sequence ID" value="NC_011601.1"/>
</dbReference>
<dbReference type="SMR" id="B7UPN8"/>
<dbReference type="KEGG" id="ecg:E2348C_4393"/>
<dbReference type="HOGENOM" id="CLU_035040_1_0_6"/>
<dbReference type="UniPathway" id="UPA00653"/>
<dbReference type="Proteomes" id="UP000008205">
    <property type="component" value="Chromosome"/>
</dbReference>
<dbReference type="GO" id="GO:0030288">
    <property type="term" value="C:outer membrane-bounded periplasmic space"/>
    <property type="evidence" value="ECO:0007669"/>
    <property type="project" value="TreeGrafter"/>
</dbReference>
<dbReference type="GO" id="GO:0005509">
    <property type="term" value="F:calcium ion binding"/>
    <property type="evidence" value="ECO:0007669"/>
    <property type="project" value="UniProtKB-UniRule"/>
</dbReference>
<dbReference type="GO" id="GO:0020037">
    <property type="term" value="F:heme binding"/>
    <property type="evidence" value="ECO:0007669"/>
    <property type="project" value="InterPro"/>
</dbReference>
<dbReference type="GO" id="GO:0005506">
    <property type="term" value="F:iron ion binding"/>
    <property type="evidence" value="ECO:0007669"/>
    <property type="project" value="UniProtKB-UniRule"/>
</dbReference>
<dbReference type="GO" id="GO:0042279">
    <property type="term" value="F:nitrite reductase (cytochrome, ammonia-forming) activity"/>
    <property type="evidence" value="ECO:0007669"/>
    <property type="project" value="UniProtKB-UniRule"/>
</dbReference>
<dbReference type="GO" id="GO:0019645">
    <property type="term" value="P:anaerobic electron transport chain"/>
    <property type="evidence" value="ECO:0007669"/>
    <property type="project" value="TreeGrafter"/>
</dbReference>
<dbReference type="GO" id="GO:0042128">
    <property type="term" value="P:nitrate assimilation"/>
    <property type="evidence" value="ECO:0007669"/>
    <property type="project" value="UniProtKB-UniRule"/>
</dbReference>
<dbReference type="CDD" id="cd00548">
    <property type="entry name" value="NrfA-like"/>
    <property type="match status" value="1"/>
</dbReference>
<dbReference type="FunFam" id="1.10.1130.10:FF:000002">
    <property type="entry name" value="Cytochrome c-552"/>
    <property type="match status" value="1"/>
</dbReference>
<dbReference type="FunFam" id="1.20.140.10:FF:000014">
    <property type="entry name" value="Cytochrome c-552"/>
    <property type="match status" value="1"/>
</dbReference>
<dbReference type="Gene3D" id="1.20.140.10">
    <property type="entry name" value="Butyryl-CoA Dehydrogenase, subunit A, domain 3"/>
    <property type="match status" value="1"/>
</dbReference>
<dbReference type="Gene3D" id="1.10.1130.10">
    <property type="entry name" value="Flavocytochrome C3, Chain A"/>
    <property type="match status" value="1"/>
</dbReference>
<dbReference type="HAMAP" id="MF_01182">
    <property type="entry name" value="Cytochrom_C552"/>
    <property type="match status" value="1"/>
</dbReference>
<dbReference type="InterPro" id="IPR003321">
    <property type="entry name" value="Cyt_c552"/>
</dbReference>
<dbReference type="InterPro" id="IPR017570">
    <property type="entry name" value="Cyt_c_NO2Rdtase_formate-dep"/>
</dbReference>
<dbReference type="InterPro" id="IPR036280">
    <property type="entry name" value="Multihaem_cyt_sf"/>
</dbReference>
<dbReference type="NCBIfam" id="TIGR03152">
    <property type="entry name" value="cyto_c552_HCOOH"/>
    <property type="match status" value="1"/>
</dbReference>
<dbReference type="NCBIfam" id="NF008339">
    <property type="entry name" value="PRK11125.1"/>
    <property type="match status" value="1"/>
</dbReference>
<dbReference type="PANTHER" id="PTHR30633:SF0">
    <property type="entry name" value="CYTOCHROME C-552"/>
    <property type="match status" value="1"/>
</dbReference>
<dbReference type="PANTHER" id="PTHR30633">
    <property type="entry name" value="CYTOCHROME C-552 RESPIRATORY NITRITE REDUCTASE"/>
    <property type="match status" value="1"/>
</dbReference>
<dbReference type="Pfam" id="PF02335">
    <property type="entry name" value="Cytochrom_C552"/>
    <property type="match status" value="1"/>
</dbReference>
<dbReference type="PIRSF" id="PIRSF000243">
    <property type="entry name" value="Cyt_c552"/>
    <property type="match status" value="1"/>
</dbReference>
<dbReference type="SUPFAM" id="SSF48695">
    <property type="entry name" value="Multiheme cytochromes"/>
    <property type="match status" value="1"/>
</dbReference>
<dbReference type="PROSITE" id="PS51008">
    <property type="entry name" value="MULTIHEME_CYTC"/>
    <property type="match status" value="1"/>
</dbReference>
<feature type="signal peptide" evidence="1">
    <location>
        <begin position="1"/>
        <end position="26"/>
    </location>
</feature>
<feature type="chain" id="PRO_1000164439" description="Cytochrome c-552">
    <location>
        <begin position="27"/>
        <end position="478"/>
    </location>
</feature>
<feature type="binding site" description="axial binding residue" evidence="1">
    <location>
        <position position="94"/>
    </location>
    <ligand>
        <name>heme c</name>
        <dbReference type="ChEBI" id="CHEBI:61717"/>
        <label>3</label>
    </ligand>
    <ligandPart>
        <name>Fe</name>
        <dbReference type="ChEBI" id="CHEBI:18248"/>
    </ligandPart>
</feature>
<feature type="binding site" description="covalent" evidence="1">
    <location>
        <position position="122"/>
    </location>
    <ligand>
        <name>heme</name>
        <dbReference type="ChEBI" id="CHEBI:30413"/>
        <label>1</label>
    </ligand>
</feature>
<feature type="binding site" description="covalent" evidence="1">
    <location>
        <position position="125"/>
    </location>
    <ligand>
        <name>heme</name>
        <dbReference type="ChEBI" id="CHEBI:30413"/>
        <label>1</label>
    </ligand>
</feature>
<feature type="binding site" description="axial binding residue" evidence="1">
    <location>
        <position position="126"/>
    </location>
    <ligand>
        <name>heme</name>
        <dbReference type="ChEBI" id="CHEBI:30413"/>
        <label>1</label>
    </ligand>
    <ligandPart>
        <name>Fe</name>
        <dbReference type="ChEBI" id="CHEBI:18248"/>
    </ligandPart>
</feature>
<feature type="binding site" description="covalent" evidence="1">
    <location>
        <position position="160"/>
    </location>
    <ligand>
        <name>heme c</name>
        <dbReference type="ChEBI" id="CHEBI:61717"/>
        <label>2</label>
    </ligand>
</feature>
<feature type="binding site" description="covalent" evidence="1">
    <location>
        <position position="163"/>
    </location>
    <ligand>
        <name>heme c</name>
        <dbReference type="ChEBI" id="CHEBI:61717"/>
        <label>2</label>
    </ligand>
</feature>
<feature type="binding site" description="axial binding residue" evidence="1">
    <location>
        <position position="164"/>
    </location>
    <ligand>
        <name>heme c</name>
        <dbReference type="ChEBI" id="CHEBI:61717"/>
        <label>2</label>
    </ligand>
    <ligandPart>
        <name>Fe</name>
        <dbReference type="ChEBI" id="CHEBI:18248"/>
    </ligandPart>
</feature>
<feature type="binding site" description="covalent" evidence="1">
    <location>
        <position position="209"/>
    </location>
    <ligand>
        <name>heme c</name>
        <dbReference type="ChEBI" id="CHEBI:61717"/>
        <label>3</label>
    </ligand>
</feature>
<feature type="binding site" description="covalent" evidence="1">
    <location>
        <position position="212"/>
    </location>
    <ligand>
        <name>heme c</name>
        <dbReference type="ChEBI" id="CHEBI:61717"/>
        <label>3</label>
    </ligand>
</feature>
<feature type="binding site" description="axial binding residue" evidence="1">
    <location>
        <position position="213"/>
    </location>
    <ligand>
        <name>heme c</name>
        <dbReference type="ChEBI" id="CHEBI:61717"/>
        <label>3</label>
    </ligand>
    <ligandPart>
        <name>Fe</name>
        <dbReference type="ChEBI" id="CHEBI:18248"/>
    </ligandPart>
</feature>
<feature type="binding site" evidence="1">
    <location>
        <position position="215"/>
    </location>
    <ligand>
        <name>Ca(2+)</name>
        <dbReference type="ChEBI" id="CHEBI:29108"/>
    </ligand>
</feature>
<feature type="binding site" evidence="1">
    <location>
        <position position="216"/>
    </location>
    <ligand>
        <name>Ca(2+)</name>
        <dbReference type="ChEBI" id="CHEBI:29108"/>
    </ligand>
</feature>
<feature type="binding site" evidence="1">
    <location>
        <position position="216"/>
    </location>
    <ligand>
        <name>substrate</name>
    </ligand>
</feature>
<feature type="binding site" evidence="1">
    <location>
        <position position="261"/>
    </location>
    <ligand>
        <name>Ca(2+)</name>
        <dbReference type="ChEBI" id="CHEBI:29108"/>
    </ligand>
</feature>
<feature type="binding site" evidence="1">
    <location>
        <position position="263"/>
    </location>
    <ligand>
        <name>Ca(2+)</name>
        <dbReference type="ChEBI" id="CHEBI:29108"/>
    </ligand>
</feature>
<feature type="binding site" evidence="1">
    <location>
        <position position="264"/>
    </location>
    <ligand>
        <name>substrate</name>
    </ligand>
</feature>
<feature type="binding site" description="axial binding residue" evidence="1">
    <location>
        <position position="275"/>
    </location>
    <ligand>
        <name>heme c</name>
        <dbReference type="ChEBI" id="CHEBI:61717"/>
        <label>5</label>
    </ligand>
    <ligandPart>
        <name>Fe</name>
        <dbReference type="ChEBI" id="CHEBI:18248"/>
    </ligandPart>
</feature>
<feature type="binding site" description="covalent" evidence="1">
    <location>
        <position position="282"/>
    </location>
    <ligand>
        <name>heme c</name>
        <dbReference type="ChEBI" id="CHEBI:61717"/>
        <label>4</label>
    </ligand>
</feature>
<feature type="binding site" description="covalent" evidence="1">
    <location>
        <position position="285"/>
    </location>
    <ligand>
        <name>heme c</name>
        <dbReference type="ChEBI" id="CHEBI:61717"/>
        <label>4</label>
    </ligand>
</feature>
<feature type="binding site" description="axial binding residue" evidence="1">
    <location>
        <position position="286"/>
    </location>
    <ligand>
        <name>heme c</name>
        <dbReference type="ChEBI" id="CHEBI:61717"/>
        <label>4</label>
    </ligand>
    <ligandPart>
        <name>Fe</name>
        <dbReference type="ChEBI" id="CHEBI:18248"/>
    </ligandPart>
</feature>
<feature type="binding site" description="axial binding residue" evidence="1">
    <location>
        <position position="301"/>
    </location>
    <ligand>
        <name>heme c</name>
        <dbReference type="ChEBI" id="CHEBI:61717"/>
        <label>2</label>
    </ligand>
    <ligandPart>
        <name>Fe</name>
        <dbReference type="ChEBI" id="CHEBI:18248"/>
    </ligandPart>
</feature>
<feature type="binding site" description="covalent" evidence="1">
    <location>
        <position position="314"/>
    </location>
    <ligand>
        <name>heme c</name>
        <dbReference type="ChEBI" id="CHEBI:61717"/>
        <label>5</label>
    </ligand>
</feature>
<feature type="binding site" description="covalent" evidence="1">
    <location>
        <position position="317"/>
    </location>
    <ligand>
        <name>heme c</name>
        <dbReference type="ChEBI" id="CHEBI:61717"/>
        <label>5</label>
    </ligand>
</feature>
<feature type="binding site" description="axial binding residue" evidence="1">
    <location>
        <position position="318"/>
    </location>
    <ligand>
        <name>heme c</name>
        <dbReference type="ChEBI" id="CHEBI:61717"/>
        <label>5</label>
    </ligand>
    <ligandPart>
        <name>Fe</name>
        <dbReference type="ChEBI" id="CHEBI:18248"/>
    </ligandPart>
</feature>
<feature type="binding site" description="axial binding residue" evidence="1">
    <location>
        <position position="393"/>
    </location>
    <ligand>
        <name>heme c</name>
        <dbReference type="ChEBI" id="CHEBI:61717"/>
        <label>4</label>
    </ligand>
    <ligandPart>
        <name>Fe</name>
        <dbReference type="ChEBI" id="CHEBI:18248"/>
    </ligandPart>
</feature>
<comment type="function">
    <text evidence="1">Catalyzes the reduction of nitrite to ammonia, consuming six electrons in the process.</text>
</comment>
<comment type="catalytic activity">
    <reaction evidence="1">
        <text>6 Fe(III)-[cytochrome c] + NH4(+) + 2 H2O = 6 Fe(II)-[cytochrome c] + nitrite + 8 H(+)</text>
        <dbReference type="Rhea" id="RHEA:13089"/>
        <dbReference type="Rhea" id="RHEA-COMP:10350"/>
        <dbReference type="Rhea" id="RHEA-COMP:14399"/>
        <dbReference type="ChEBI" id="CHEBI:15377"/>
        <dbReference type="ChEBI" id="CHEBI:15378"/>
        <dbReference type="ChEBI" id="CHEBI:16301"/>
        <dbReference type="ChEBI" id="CHEBI:28938"/>
        <dbReference type="ChEBI" id="CHEBI:29033"/>
        <dbReference type="ChEBI" id="CHEBI:29034"/>
        <dbReference type="EC" id="1.7.2.2"/>
    </reaction>
</comment>
<comment type="cofactor">
    <cofactor evidence="1">
        <name>Ca(2+)</name>
        <dbReference type="ChEBI" id="CHEBI:29108"/>
    </cofactor>
    <text evidence="1">Binds 1 Ca(2+) ion per monomer.</text>
</comment>
<comment type="cofactor">
    <cofactor evidence="1">
        <name>heme c</name>
        <dbReference type="ChEBI" id="CHEBI:61717"/>
    </cofactor>
    <text evidence="1">Binds 5 heme c groups covalently per monomer.</text>
</comment>
<comment type="pathway">
    <text evidence="1">Nitrogen metabolism; nitrate reduction (assimilation).</text>
</comment>
<comment type="subcellular location">
    <subcellularLocation>
        <location evidence="1">Periplasm</location>
    </subcellularLocation>
</comment>
<comment type="similarity">
    <text evidence="1">Belongs to the cytochrome c-552 family.</text>
</comment>